<accession>Q9FG24</accession>
<proteinExistence type="evidence at protein level"/>
<name>SRF2_ARATH</name>
<reference key="1">
    <citation type="journal article" date="2007" name="BMC Plant Biol.">
        <title>Molecular characterisation of the STRUBBELIG-RECEPTOR FAMILY of genes encoding putative leucine-rich repeat receptor-like kinases in Arabidopsis thaliana.</title>
        <authorList>
            <person name="Eyueboglu B."/>
            <person name="Pfister K."/>
            <person name="Haberer G."/>
            <person name="Chevalier D."/>
            <person name="Fuchs A."/>
            <person name="Mayer K.F.X."/>
            <person name="Schneitz K."/>
        </authorList>
    </citation>
    <scope>NUCLEOTIDE SEQUENCE [MRNA]</scope>
    <scope>FUNCTION</scope>
    <scope>TISSUE SPECIFICITY</scope>
    <scope>DISRUPTION PHENOTYPE</scope>
    <source>
        <strain>cv. Columbia</strain>
    </source>
</reference>
<reference key="2">
    <citation type="submission" date="2000-05" db="EMBL/GenBank/DDBJ databases">
        <title>Structural analysis of Arabidopsis thaliana chromosome 5. XI.</title>
        <authorList>
            <person name="Kaneko T."/>
            <person name="Katoh T."/>
            <person name="Asamizu E."/>
            <person name="Sato S."/>
            <person name="Nakamura Y."/>
            <person name="Kotani H."/>
            <person name="Tabata S."/>
        </authorList>
    </citation>
    <scope>NUCLEOTIDE SEQUENCE [LARGE SCALE GENOMIC DNA]</scope>
    <source>
        <strain>cv. Columbia</strain>
    </source>
</reference>
<reference key="3">
    <citation type="journal article" date="2017" name="Plant J.">
        <title>Araport11: a complete reannotation of the Arabidopsis thaliana reference genome.</title>
        <authorList>
            <person name="Cheng C.Y."/>
            <person name="Krishnakumar V."/>
            <person name="Chan A.P."/>
            <person name="Thibaud-Nissen F."/>
            <person name="Schobel S."/>
            <person name="Town C.D."/>
        </authorList>
    </citation>
    <scope>GENOME REANNOTATION</scope>
    <source>
        <strain>cv. Columbia</strain>
    </source>
</reference>
<feature type="signal peptide" evidence="1">
    <location>
        <begin position="1"/>
        <end position="23"/>
    </location>
</feature>
<feature type="chain" id="PRO_0000311842" description="Protein STRUBBELIG-RECEPTOR FAMILY 2">
    <location>
        <begin position="24"/>
        <end position="735"/>
    </location>
</feature>
<feature type="topological domain" description="Extracellular" evidence="1">
    <location>
        <begin position="24"/>
        <end position="297"/>
    </location>
</feature>
<feature type="transmembrane region" description="Helical" evidence="1">
    <location>
        <begin position="298"/>
        <end position="318"/>
    </location>
</feature>
<feature type="topological domain" description="Cytoplasmic" evidence="1">
    <location>
        <begin position="319"/>
        <end position="735"/>
    </location>
</feature>
<feature type="repeat" description="LRR 1">
    <location>
        <begin position="78"/>
        <end position="94"/>
    </location>
</feature>
<feature type="repeat" description="LRR 2">
    <location>
        <begin position="96"/>
        <end position="119"/>
    </location>
</feature>
<feature type="repeat" description="LRR 3">
    <location>
        <begin position="120"/>
        <end position="140"/>
    </location>
</feature>
<feature type="repeat" description="LRR 4">
    <location>
        <begin position="142"/>
        <end position="163"/>
    </location>
</feature>
<feature type="repeat" description="LRR 5">
    <location>
        <begin position="165"/>
        <end position="187"/>
    </location>
</feature>
<feature type="repeat" description="LRR 7">
    <location>
        <begin position="189"/>
        <end position="211"/>
    </location>
</feature>
<feature type="repeat" description="LRR 7">
    <location>
        <begin position="212"/>
        <end position="232"/>
    </location>
</feature>
<feature type="repeat" description="LRR 8">
    <location>
        <begin position="233"/>
        <end position="253"/>
    </location>
</feature>
<feature type="domain" description="Protein kinase" evidence="2">
    <location>
        <begin position="415"/>
        <end position="695"/>
    </location>
</feature>
<feature type="region of interest" description="Disordered" evidence="3">
    <location>
        <begin position="358"/>
        <end position="378"/>
    </location>
</feature>
<feature type="glycosylation site" description="N-linked (GlcNAc...) asparagine" evidence="1">
    <location>
        <position position="118"/>
    </location>
</feature>
<feature type="glycosylation site" description="N-linked (GlcNAc...) asparagine" evidence="1">
    <location>
        <position position="128"/>
    </location>
</feature>
<feature type="glycosylation site" description="N-linked (GlcNAc...) asparagine" evidence="1">
    <location>
        <position position="147"/>
    </location>
</feature>
<feature type="glycosylation site" description="N-linked (GlcNAc...) asparagine" evidence="1">
    <location>
        <position position="175"/>
    </location>
</feature>
<feature type="glycosylation site" description="N-linked (GlcNAc...) asparagine" evidence="1">
    <location>
        <position position="189"/>
    </location>
</feature>
<feature type="glycosylation site" description="N-linked (GlcNAc...) asparagine" evidence="1">
    <location>
        <position position="264"/>
    </location>
</feature>
<gene>
    <name type="primary">SRF2</name>
    <name type="ordered locus">At5g06820</name>
    <name type="ORF">MPH15.19</name>
</gene>
<evidence type="ECO:0000255" key="1"/>
<evidence type="ECO:0000255" key="2">
    <source>
        <dbReference type="PROSITE-ProRule" id="PRU00159"/>
    </source>
</evidence>
<evidence type="ECO:0000256" key="3">
    <source>
        <dbReference type="SAM" id="MobiDB-lite"/>
    </source>
</evidence>
<evidence type="ECO:0000269" key="4">
    <source>
    </source>
</evidence>
<evidence type="ECO:0000305" key="5"/>
<organism>
    <name type="scientific">Arabidopsis thaliana</name>
    <name type="common">Mouse-ear cress</name>
    <dbReference type="NCBI Taxonomy" id="3702"/>
    <lineage>
        <taxon>Eukaryota</taxon>
        <taxon>Viridiplantae</taxon>
        <taxon>Streptophyta</taxon>
        <taxon>Embryophyta</taxon>
        <taxon>Tracheophyta</taxon>
        <taxon>Spermatophyta</taxon>
        <taxon>Magnoliopsida</taxon>
        <taxon>eudicotyledons</taxon>
        <taxon>Gunneridae</taxon>
        <taxon>Pentapetalae</taxon>
        <taxon>rosids</taxon>
        <taxon>malvids</taxon>
        <taxon>Brassicales</taxon>
        <taxon>Brassicaceae</taxon>
        <taxon>Camelineae</taxon>
        <taxon>Arabidopsis</taxon>
    </lineage>
</organism>
<sequence>MKTKQQLRFLATILLTTILFVLAKTDTDPLEVLALQDLYKSLRNPEQLRGWRLEGGDPCGEAWLGISCSGSSIVDLQLRELKLLGSLGNQLQHLHNLKILDVSFNNLEGEIPFGLPPNATHINMAYNNLTQSIPFSLPLMTSLQSLNLSHNSLSGPLGNVFSGLQIKEMDLSFNNLTGDLPSSFGTLMNLTSLYLQNNRLTGSVIYLADLPLADLNIEDNQFSGIIPSHFQSIPHLWIWGNKFHVEPNYKPWKFPLDVRPLIQNDTGYPTTESSAIMNFPRPETQKVKKKKKGIGAGSTFLLVGGLALLGTFFALFAVRMNHRRAQNLAAIHRSNNSIAYSLPVSTGREYPVATEDNPQIKRFQPPPAPQLRHLPSPPVRIDKSARRKSFSATCQYPSFAKLFSAAELQLATNCFSEENLLGEGPLGSVYRAKLPDGQFAVVRNIPMSSLSLHEEEQFTEVLQTASKLRHPNIVTLLGFCIENGEHLLVYEYVGHLSLYNAMHDEVYKPLSWGLRLRIAIGVARALDYLHSSFCPPIAHSDLKATNILLDEELTPRIADCGLASLRPLTSNSVKLRASEIAIQNTGYIAPEHGQPGSSGTKSDTYALGVLLLELLTGRKAFDSSRPRGEQLLVKWASTRLHDRRSLEQMIDGGIAGTFSSRVASQYADIISLCTQAEKEFRPPVSEIVEALTALIQKQNKEASSSVADKTDPFSKSFCSTRTRFISSPTFSYLSS</sequence>
<keyword id="KW-0325">Glycoprotein</keyword>
<keyword id="KW-0433">Leucine-rich repeat</keyword>
<keyword id="KW-0472">Membrane</keyword>
<keyword id="KW-0675">Receptor</keyword>
<keyword id="KW-1185">Reference proteome</keyword>
<keyword id="KW-0677">Repeat</keyword>
<keyword id="KW-0732">Signal</keyword>
<keyword id="KW-0812">Transmembrane</keyword>
<keyword id="KW-1133">Transmembrane helix</keyword>
<comment type="interaction">
    <interactant intactId="EBI-16955365">
        <id>Q9FG24</id>
    </interactant>
    <interactant intactId="EBI-16902452">
        <id>Q8VYT3</id>
        <label>At4g30520</label>
    </interactant>
    <organismsDiffer>false</organismsDiffer>
    <experiments>2</experiments>
</comment>
<comment type="interaction">
    <interactant intactId="EBI-16955365">
        <id>Q9FG24</id>
    </interactant>
    <interactant intactId="EBI-16895926">
        <id>Q6XAT2</id>
        <label>ERL2</label>
    </interactant>
    <organismsDiffer>false</organismsDiffer>
    <experiments>2</experiments>
</comment>
<comment type="interaction">
    <interactant intactId="EBI-16955365">
        <id>Q9FG24</id>
    </interactant>
    <interactant intactId="EBI-16955365">
        <id>Q9FG24</id>
        <label>SRF2</label>
    </interactant>
    <organismsDiffer>false</organismsDiffer>
    <experiments>2</experiments>
</comment>
<comment type="subcellular location">
    <subcellularLocation>
        <location evidence="5">Membrane</location>
        <topology evidence="5">Single-pass membrane protein</topology>
    </subcellularLocation>
</comment>
<comment type="tissue specificity">
    <text evidence="4">Expressed in seedlings, roots, stems, leaves, flowers and siliques.</text>
</comment>
<comment type="domain">
    <text>The protein kinase domain is predicted to be catalytically inactive.</text>
</comment>
<comment type="disruption phenotype">
    <text evidence="4">No visible phenotype.</text>
</comment>
<comment type="miscellaneous">
    <text>Cannot functionally replace STRUBBELIG.</text>
</comment>
<comment type="miscellaneous">
    <text>Over-expression of SRF2 led to male-sterility in cv. Columbia but not in cv. Landsberg.</text>
</comment>
<comment type="similarity">
    <text evidence="2">Belongs to the protein kinase superfamily. Ser/Thr protein kinase family.</text>
</comment>
<protein>
    <recommendedName>
        <fullName>Protein STRUBBELIG-RECEPTOR FAMILY 2</fullName>
    </recommendedName>
    <alternativeName>
        <fullName>Leucine-rich repeat receptor kinase-like protein SRF2</fullName>
    </alternativeName>
</protein>
<dbReference type="EMBL" id="AY518287">
    <property type="protein sequence ID" value="AAR99870.1"/>
    <property type="molecule type" value="mRNA"/>
</dbReference>
<dbReference type="EMBL" id="AP002032">
    <property type="protein sequence ID" value="BAB09817.1"/>
    <property type="molecule type" value="Genomic_DNA"/>
</dbReference>
<dbReference type="EMBL" id="CP002688">
    <property type="protein sequence ID" value="AED91070.1"/>
    <property type="molecule type" value="Genomic_DNA"/>
</dbReference>
<dbReference type="RefSeq" id="NP_196300.1">
    <property type="nucleotide sequence ID" value="NM_120765.3"/>
</dbReference>
<dbReference type="SMR" id="Q9FG24"/>
<dbReference type="BioGRID" id="15852">
    <property type="interactions" value="54"/>
</dbReference>
<dbReference type="FunCoup" id="Q9FG24">
    <property type="interactions" value="4"/>
</dbReference>
<dbReference type="IntAct" id="Q9FG24">
    <property type="interactions" value="53"/>
</dbReference>
<dbReference type="STRING" id="3702.Q9FG24"/>
<dbReference type="GlyCosmos" id="Q9FG24">
    <property type="glycosylation" value="6 sites, No reported glycans"/>
</dbReference>
<dbReference type="GlyGen" id="Q9FG24">
    <property type="glycosylation" value="6 sites"/>
</dbReference>
<dbReference type="PaxDb" id="3702-AT5G06820.1"/>
<dbReference type="EnsemblPlants" id="AT5G06820.1">
    <property type="protein sequence ID" value="AT5G06820.1"/>
    <property type="gene ID" value="AT5G06820"/>
</dbReference>
<dbReference type="GeneID" id="830573"/>
<dbReference type="Gramene" id="AT5G06820.1">
    <property type="protein sequence ID" value="AT5G06820.1"/>
    <property type="gene ID" value="AT5G06820"/>
</dbReference>
<dbReference type="KEGG" id="ath:AT5G06820"/>
<dbReference type="Araport" id="AT5G06820"/>
<dbReference type="TAIR" id="AT5G06820">
    <property type="gene designation" value="SRF2"/>
</dbReference>
<dbReference type="eggNOG" id="ENOG502QR3N">
    <property type="taxonomic scope" value="Eukaryota"/>
</dbReference>
<dbReference type="HOGENOM" id="CLU_000288_92_2_1"/>
<dbReference type="InParanoid" id="Q9FG24"/>
<dbReference type="OMA" id="THINMAY"/>
<dbReference type="PhylomeDB" id="Q9FG24"/>
<dbReference type="PRO" id="PR:Q9FG24"/>
<dbReference type="Proteomes" id="UP000006548">
    <property type="component" value="Chromosome 5"/>
</dbReference>
<dbReference type="ExpressionAtlas" id="Q9FG24">
    <property type="expression patterns" value="baseline and differential"/>
</dbReference>
<dbReference type="GO" id="GO:0016020">
    <property type="term" value="C:membrane"/>
    <property type="evidence" value="ECO:0007669"/>
    <property type="project" value="UniProtKB-SubCell"/>
</dbReference>
<dbReference type="GO" id="GO:0005524">
    <property type="term" value="F:ATP binding"/>
    <property type="evidence" value="ECO:0007669"/>
    <property type="project" value="InterPro"/>
</dbReference>
<dbReference type="GO" id="GO:0042802">
    <property type="term" value="F:identical protein binding"/>
    <property type="evidence" value="ECO:0000353"/>
    <property type="project" value="IntAct"/>
</dbReference>
<dbReference type="GO" id="GO:0004672">
    <property type="term" value="F:protein kinase activity"/>
    <property type="evidence" value="ECO:0007669"/>
    <property type="project" value="InterPro"/>
</dbReference>
<dbReference type="FunFam" id="1.10.510.10:FF:000479">
    <property type="entry name" value="Leucine-rich repeat receptor-like protein kinase"/>
    <property type="match status" value="1"/>
</dbReference>
<dbReference type="FunFam" id="3.80.10.10:FF:000062">
    <property type="entry name" value="protein STRUBBELIG-RECEPTOR FAMILY 3"/>
    <property type="match status" value="1"/>
</dbReference>
<dbReference type="FunFam" id="3.30.200.20:FF:000125">
    <property type="entry name" value="Protein STRUBBELIG-RECEPTOR FAMILY 8"/>
    <property type="match status" value="1"/>
</dbReference>
<dbReference type="Gene3D" id="3.30.200.20">
    <property type="entry name" value="Phosphorylase Kinase, domain 1"/>
    <property type="match status" value="1"/>
</dbReference>
<dbReference type="Gene3D" id="3.80.10.10">
    <property type="entry name" value="Ribonuclease Inhibitor"/>
    <property type="match status" value="1"/>
</dbReference>
<dbReference type="Gene3D" id="1.10.510.10">
    <property type="entry name" value="Transferase(Phosphotransferase) domain 1"/>
    <property type="match status" value="1"/>
</dbReference>
<dbReference type="InterPro" id="IPR011009">
    <property type="entry name" value="Kinase-like_dom_sf"/>
</dbReference>
<dbReference type="InterPro" id="IPR001611">
    <property type="entry name" value="Leu-rich_rpt"/>
</dbReference>
<dbReference type="InterPro" id="IPR032675">
    <property type="entry name" value="LRR_dom_sf"/>
</dbReference>
<dbReference type="InterPro" id="IPR013210">
    <property type="entry name" value="LRR_N_plant-typ"/>
</dbReference>
<dbReference type="InterPro" id="IPR046959">
    <property type="entry name" value="PRK1-6/SRF4-like"/>
</dbReference>
<dbReference type="InterPro" id="IPR000719">
    <property type="entry name" value="Prot_kinase_dom"/>
</dbReference>
<dbReference type="InterPro" id="IPR008271">
    <property type="entry name" value="Ser/Thr_kinase_AS"/>
</dbReference>
<dbReference type="PANTHER" id="PTHR48007">
    <property type="entry name" value="LEUCINE-RICH REPEAT RECEPTOR-LIKE PROTEIN KINASE PXC1"/>
    <property type="match status" value="1"/>
</dbReference>
<dbReference type="PANTHER" id="PTHR48007:SF56">
    <property type="entry name" value="LOW QUALITY PROTEIN: PROTEIN STRUBBELIG-RECEPTOR FAMILY 2"/>
    <property type="match status" value="1"/>
</dbReference>
<dbReference type="Pfam" id="PF00560">
    <property type="entry name" value="LRR_1"/>
    <property type="match status" value="5"/>
</dbReference>
<dbReference type="Pfam" id="PF08263">
    <property type="entry name" value="LRRNT_2"/>
    <property type="match status" value="1"/>
</dbReference>
<dbReference type="Pfam" id="PF00069">
    <property type="entry name" value="Pkinase"/>
    <property type="match status" value="1"/>
</dbReference>
<dbReference type="SMART" id="SM00220">
    <property type="entry name" value="S_TKc"/>
    <property type="match status" value="1"/>
</dbReference>
<dbReference type="SUPFAM" id="SSF52058">
    <property type="entry name" value="L domain-like"/>
    <property type="match status" value="1"/>
</dbReference>
<dbReference type="SUPFAM" id="SSF56112">
    <property type="entry name" value="Protein kinase-like (PK-like)"/>
    <property type="match status" value="1"/>
</dbReference>
<dbReference type="PROSITE" id="PS51450">
    <property type="entry name" value="LRR"/>
    <property type="match status" value="5"/>
</dbReference>
<dbReference type="PROSITE" id="PS50011">
    <property type="entry name" value="PROTEIN_KINASE_DOM"/>
    <property type="match status" value="1"/>
</dbReference>
<dbReference type="PROSITE" id="PS00108">
    <property type="entry name" value="PROTEIN_KINASE_ST"/>
    <property type="match status" value="1"/>
</dbReference>